<dbReference type="EMBL" id="CP000425">
    <property type="protein sequence ID" value="ABJ73933.1"/>
    <property type="molecule type" value="Genomic_DNA"/>
</dbReference>
<dbReference type="RefSeq" id="WP_011677242.1">
    <property type="nucleotide sequence ID" value="NC_008527.1"/>
</dbReference>
<dbReference type="SMR" id="Q02VT9"/>
<dbReference type="GeneID" id="61110521"/>
<dbReference type="KEGG" id="llc:LACR_2503"/>
<dbReference type="HOGENOM" id="CLU_113441_5_3_9"/>
<dbReference type="Proteomes" id="UP000000240">
    <property type="component" value="Chromosome"/>
</dbReference>
<dbReference type="GO" id="GO:0005737">
    <property type="term" value="C:cytoplasm"/>
    <property type="evidence" value="ECO:0007669"/>
    <property type="project" value="UniProtKB-ARBA"/>
</dbReference>
<dbReference type="GO" id="GO:1990904">
    <property type="term" value="C:ribonucleoprotein complex"/>
    <property type="evidence" value="ECO:0007669"/>
    <property type="project" value="UniProtKB-KW"/>
</dbReference>
<dbReference type="GO" id="GO:0005840">
    <property type="term" value="C:ribosome"/>
    <property type="evidence" value="ECO:0007669"/>
    <property type="project" value="UniProtKB-KW"/>
</dbReference>
<dbReference type="GO" id="GO:0070181">
    <property type="term" value="F:small ribosomal subunit rRNA binding"/>
    <property type="evidence" value="ECO:0007669"/>
    <property type="project" value="TreeGrafter"/>
</dbReference>
<dbReference type="GO" id="GO:0003735">
    <property type="term" value="F:structural constituent of ribosome"/>
    <property type="evidence" value="ECO:0007669"/>
    <property type="project" value="InterPro"/>
</dbReference>
<dbReference type="GO" id="GO:0006412">
    <property type="term" value="P:translation"/>
    <property type="evidence" value="ECO:0007669"/>
    <property type="project" value="UniProtKB-UniRule"/>
</dbReference>
<dbReference type="CDD" id="cd00473">
    <property type="entry name" value="bS6"/>
    <property type="match status" value="1"/>
</dbReference>
<dbReference type="FunFam" id="3.30.70.60:FF:000002">
    <property type="entry name" value="30S ribosomal protein S6"/>
    <property type="match status" value="1"/>
</dbReference>
<dbReference type="Gene3D" id="3.30.70.60">
    <property type="match status" value="1"/>
</dbReference>
<dbReference type="HAMAP" id="MF_00360">
    <property type="entry name" value="Ribosomal_bS6"/>
    <property type="match status" value="1"/>
</dbReference>
<dbReference type="InterPro" id="IPR000529">
    <property type="entry name" value="Ribosomal_bS6"/>
</dbReference>
<dbReference type="InterPro" id="IPR035980">
    <property type="entry name" value="Ribosomal_bS6_sf"/>
</dbReference>
<dbReference type="InterPro" id="IPR020814">
    <property type="entry name" value="Ribosomal_S6_plastid/chlpt"/>
</dbReference>
<dbReference type="InterPro" id="IPR014717">
    <property type="entry name" value="Transl_elong_EF1B/ribsomal_bS6"/>
</dbReference>
<dbReference type="NCBIfam" id="TIGR00166">
    <property type="entry name" value="S6"/>
    <property type="match status" value="1"/>
</dbReference>
<dbReference type="PANTHER" id="PTHR21011">
    <property type="entry name" value="MITOCHONDRIAL 28S RIBOSOMAL PROTEIN S6"/>
    <property type="match status" value="1"/>
</dbReference>
<dbReference type="PANTHER" id="PTHR21011:SF1">
    <property type="entry name" value="SMALL RIBOSOMAL SUBUNIT PROTEIN BS6M"/>
    <property type="match status" value="1"/>
</dbReference>
<dbReference type="Pfam" id="PF01250">
    <property type="entry name" value="Ribosomal_S6"/>
    <property type="match status" value="1"/>
</dbReference>
<dbReference type="SUPFAM" id="SSF54995">
    <property type="entry name" value="Ribosomal protein S6"/>
    <property type="match status" value="1"/>
</dbReference>
<comment type="function">
    <text evidence="1">Binds together with bS18 to 16S ribosomal RNA.</text>
</comment>
<comment type="similarity">
    <text evidence="1">Belongs to the bacterial ribosomal protein bS6 family.</text>
</comment>
<reference key="1">
    <citation type="journal article" date="2006" name="Proc. Natl. Acad. Sci. U.S.A.">
        <title>Comparative genomics of the lactic acid bacteria.</title>
        <authorList>
            <person name="Makarova K.S."/>
            <person name="Slesarev A."/>
            <person name="Wolf Y.I."/>
            <person name="Sorokin A."/>
            <person name="Mirkin B."/>
            <person name="Koonin E.V."/>
            <person name="Pavlov A."/>
            <person name="Pavlova N."/>
            <person name="Karamychev V."/>
            <person name="Polouchine N."/>
            <person name="Shakhova V."/>
            <person name="Grigoriev I."/>
            <person name="Lou Y."/>
            <person name="Rohksar D."/>
            <person name="Lucas S."/>
            <person name="Huang K."/>
            <person name="Goodstein D.M."/>
            <person name="Hawkins T."/>
            <person name="Plengvidhya V."/>
            <person name="Welker D."/>
            <person name="Hughes J."/>
            <person name="Goh Y."/>
            <person name="Benson A."/>
            <person name="Baldwin K."/>
            <person name="Lee J.-H."/>
            <person name="Diaz-Muniz I."/>
            <person name="Dosti B."/>
            <person name="Smeianov V."/>
            <person name="Wechter W."/>
            <person name="Barabote R."/>
            <person name="Lorca G."/>
            <person name="Altermann E."/>
            <person name="Barrangou R."/>
            <person name="Ganesan B."/>
            <person name="Xie Y."/>
            <person name="Rawsthorne H."/>
            <person name="Tamir D."/>
            <person name="Parker C."/>
            <person name="Breidt F."/>
            <person name="Broadbent J.R."/>
            <person name="Hutkins R."/>
            <person name="O'Sullivan D."/>
            <person name="Steele J."/>
            <person name="Unlu G."/>
            <person name="Saier M.H. Jr."/>
            <person name="Klaenhammer T."/>
            <person name="Richardson P."/>
            <person name="Kozyavkin S."/>
            <person name="Weimer B.C."/>
            <person name="Mills D.A."/>
        </authorList>
    </citation>
    <scope>NUCLEOTIDE SEQUENCE [LARGE SCALE GENOMIC DNA]</scope>
    <source>
        <strain>SK11</strain>
    </source>
</reference>
<accession>Q02VT9</accession>
<organism>
    <name type="scientific">Lactococcus lactis subsp. cremoris (strain SK11)</name>
    <dbReference type="NCBI Taxonomy" id="272622"/>
    <lineage>
        <taxon>Bacteria</taxon>
        <taxon>Bacillati</taxon>
        <taxon>Bacillota</taxon>
        <taxon>Bacilli</taxon>
        <taxon>Lactobacillales</taxon>
        <taxon>Streptococcaceae</taxon>
        <taxon>Lactococcus</taxon>
        <taxon>Lactococcus cremoris subsp. cremoris</taxon>
    </lineage>
</organism>
<name>RS6_LACLS</name>
<keyword id="KW-0687">Ribonucleoprotein</keyword>
<keyword id="KW-0689">Ribosomal protein</keyword>
<keyword id="KW-0694">RNA-binding</keyword>
<keyword id="KW-0699">rRNA-binding</keyword>
<proteinExistence type="inferred from homology"/>
<feature type="chain" id="PRO_1000005285" description="Small ribosomal subunit protein bS6">
    <location>
        <begin position="1"/>
        <end position="97"/>
    </location>
</feature>
<protein>
    <recommendedName>
        <fullName evidence="1">Small ribosomal subunit protein bS6</fullName>
    </recommendedName>
    <alternativeName>
        <fullName evidence="2">30S ribosomal protein S6</fullName>
    </alternativeName>
</protein>
<evidence type="ECO:0000255" key="1">
    <source>
        <dbReference type="HAMAP-Rule" id="MF_00360"/>
    </source>
</evidence>
<evidence type="ECO:0000305" key="2"/>
<sequence length="97" mass="11307">MTKYEILYIIRPNIDEEAKTALVERFDAILTENGAANLESKDWEKRKLAYEINDFREGIYHIATFEAETTSEALSEFDRLAKINLDILRHMIVKVEA</sequence>
<gene>
    <name evidence="1" type="primary">rpsF</name>
    <name type="ordered locus">LACR_2503</name>
</gene>